<dbReference type="EMBL" id="AY151261">
    <property type="protein sequence ID" value="AAN71642.1"/>
    <property type="molecule type" value="mRNA"/>
</dbReference>
<dbReference type="EMBL" id="AK049186">
    <property type="protein sequence ID" value="BAC33596.1"/>
    <property type="molecule type" value="mRNA"/>
</dbReference>
<dbReference type="EMBL" id="AK162794">
    <property type="protein sequence ID" value="BAE37061.1"/>
    <property type="molecule type" value="mRNA"/>
</dbReference>
<dbReference type="EMBL" id="BC034372">
    <property type="protein sequence ID" value="AAH34372.1"/>
    <property type="status" value="ALT_INIT"/>
    <property type="molecule type" value="mRNA"/>
</dbReference>
<dbReference type="EMBL" id="BC065057">
    <property type="protein sequence ID" value="AAH65057.1"/>
    <property type="molecule type" value="mRNA"/>
</dbReference>
<dbReference type="CCDS" id="CCDS26712.1"/>
<dbReference type="RefSeq" id="NP_849249.1">
    <property type="nucleotide sequence ID" value="NM_178918.3"/>
</dbReference>
<dbReference type="SMR" id="Q8C7V3"/>
<dbReference type="BioGRID" id="222829">
    <property type="interactions" value="4"/>
</dbReference>
<dbReference type="FunCoup" id="Q8C7V3">
    <property type="interactions" value="3567"/>
</dbReference>
<dbReference type="IntAct" id="Q8C7V3">
    <property type="interactions" value="1"/>
</dbReference>
<dbReference type="STRING" id="10090.ENSMUSP00000048204"/>
<dbReference type="GlyGen" id="Q8C7V3">
    <property type="glycosylation" value="1 site"/>
</dbReference>
<dbReference type="iPTMnet" id="Q8C7V3"/>
<dbReference type="PhosphoSitePlus" id="Q8C7V3"/>
<dbReference type="jPOST" id="Q8C7V3"/>
<dbReference type="PaxDb" id="10090-ENSMUSP00000048204"/>
<dbReference type="PeptideAtlas" id="Q8C7V3"/>
<dbReference type="ProteomicsDB" id="299664"/>
<dbReference type="Pumba" id="Q8C7V3"/>
<dbReference type="Antibodypedia" id="44207">
    <property type="antibodies" value="60 antibodies from 17 providers"/>
</dbReference>
<dbReference type="DNASU" id="105372"/>
<dbReference type="Ensembl" id="ENSMUST00000040972.4">
    <property type="protein sequence ID" value="ENSMUSP00000048204.3"/>
    <property type="gene ID" value="ENSMUSG00000041747.4"/>
</dbReference>
<dbReference type="GeneID" id="105372"/>
<dbReference type="KEGG" id="mmu:105372"/>
<dbReference type="UCSC" id="uc007rom.1">
    <property type="organism name" value="mouse"/>
</dbReference>
<dbReference type="AGR" id="MGI:2145443"/>
<dbReference type="CTD" id="84135"/>
<dbReference type="MGI" id="MGI:2145443">
    <property type="gene designation" value="Utp15"/>
</dbReference>
<dbReference type="VEuPathDB" id="HostDB:ENSMUSG00000041747"/>
<dbReference type="eggNOG" id="KOG0267">
    <property type="taxonomic scope" value="Eukaryota"/>
</dbReference>
<dbReference type="eggNOG" id="KOG0310">
    <property type="taxonomic scope" value="Eukaryota"/>
</dbReference>
<dbReference type="GeneTree" id="ENSGT00390000004228"/>
<dbReference type="HOGENOM" id="CLU_021102_4_1_1"/>
<dbReference type="InParanoid" id="Q8C7V3"/>
<dbReference type="OMA" id="ATYQVVH"/>
<dbReference type="OrthoDB" id="431715at2759"/>
<dbReference type="PhylomeDB" id="Q8C7V3"/>
<dbReference type="TreeFam" id="TF319494"/>
<dbReference type="Reactome" id="R-MMU-6791226">
    <property type="pathway name" value="Major pathway of rRNA processing in the nucleolus and cytosol"/>
</dbReference>
<dbReference type="BioGRID-ORCS" id="105372">
    <property type="hits" value="29 hits in 75 CRISPR screens"/>
</dbReference>
<dbReference type="ChiTaRS" id="Utp15">
    <property type="organism name" value="mouse"/>
</dbReference>
<dbReference type="PRO" id="PR:Q8C7V3"/>
<dbReference type="Proteomes" id="UP000000589">
    <property type="component" value="Chromosome 13"/>
</dbReference>
<dbReference type="RNAct" id="Q8C7V3">
    <property type="molecule type" value="protein"/>
</dbReference>
<dbReference type="Bgee" id="ENSMUSG00000041747">
    <property type="expression patterns" value="Expressed in manus and 228 other cell types or tissues"/>
</dbReference>
<dbReference type="GO" id="GO:0005783">
    <property type="term" value="C:endoplasmic reticulum"/>
    <property type="evidence" value="ECO:0007669"/>
    <property type="project" value="Ensembl"/>
</dbReference>
<dbReference type="GO" id="GO:0001650">
    <property type="term" value="C:fibrillar center"/>
    <property type="evidence" value="ECO:0000250"/>
    <property type="project" value="UniProtKB"/>
</dbReference>
<dbReference type="GO" id="GO:0005730">
    <property type="term" value="C:nucleolus"/>
    <property type="evidence" value="ECO:0000250"/>
    <property type="project" value="UniProtKB"/>
</dbReference>
<dbReference type="GO" id="GO:0032040">
    <property type="term" value="C:small-subunit processome"/>
    <property type="evidence" value="ECO:0000250"/>
    <property type="project" value="UniProtKB"/>
</dbReference>
<dbReference type="GO" id="GO:2000234">
    <property type="term" value="P:positive regulation of rRNA processing"/>
    <property type="evidence" value="ECO:0007669"/>
    <property type="project" value="Ensembl"/>
</dbReference>
<dbReference type="GO" id="GO:0045943">
    <property type="term" value="P:positive regulation of transcription by RNA polymerase I"/>
    <property type="evidence" value="ECO:0007669"/>
    <property type="project" value="Ensembl"/>
</dbReference>
<dbReference type="GO" id="GO:0042274">
    <property type="term" value="P:ribosomal small subunit biogenesis"/>
    <property type="evidence" value="ECO:0000250"/>
    <property type="project" value="UniProtKB"/>
</dbReference>
<dbReference type="GO" id="GO:0006364">
    <property type="term" value="P:rRNA processing"/>
    <property type="evidence" value="ECO:0007669"/>
    <property type="project" value="UniProtKB-KW"/>
</dbReference>
<dbReference type="CDD" id="cd00200">
    <property type="entry name" value="WD40"/>
    <property type="match status" value="1"/>
</dbReference>
<dbReference type="FunFam" id="2.130.10.10:FF:000398">
    <property type="entry name" value="U3 small nucleolar RNA-associated protein 15 homolog"/>
    <property type="match status" value="1"/>
</dbReference>
<dbReference type="FunFam" id="2.130.10.10:FF:000448">
    <property type="entry name" value="U3 small nucleolar RNA-associated protein 15 homolog"/>
    <property type="match status" value="1"/>
</dbReference>
<dbReference type="Gene3D" id="2.130.10.10">
    <property type="entry name" value="YVTN repeat-like/Quinoprotein amine dehydrogenase"/>
    <property type="match status" value="2"/>
</dbReference>
<dbReference type="InterPro" id="IPR020472">
    <property type="entry name" value="G-protein_beta_WD-40_rep"/>
</dbReference>
<dbReference type="InterPro" id="IPR018983">
    <property type="entry name" value="U3_snoRNA-assocProt_15_C"/>
</dbReference>
<dbReference type="InterPro" id="IPR015943">
    <property type="entry name" value="WD40/YVTN_repeat-like_dom_sf"/>
</dbReference>
<dbReference type="InterPro" id="IPR019775">
    <property type="entry name" value="WD40_repeat_CS"/>
</dbReference>
<dbReference type="InterPro" id="IPR036322">
    <property type="entry name" value="WD40_repeat_dom_sf"/>
</dbReference>
<dbReference type="InterPro" id="IPR001680">
    <property type="entry name" value="WD40_rpt"/>
</dbReference>
<dbReference type="PANTHER" id="PTHR19924:SF26">
    <property type="entry name" value="U3 SMALL NUCLEOLAR RNA-ASSOCIATED PROTEIN 15 HOMOLOG"/>
    <property type="match status" value="1"/>
</dbReference>
<dbReference type="PANTHER" id="PTHR19924">
    <property type="entry name" value="UTP15 U3 SMALL NUCLEOLAR RNA-ASSOCIATED PROTEIN 15 FAMILY MEMBER"/>
    <property type="match status" value="1"/>
</dbReference>
<dbReference type="Pfam" id="PF09384">
    <property type="entry name" value="UTP15_C"/>
    <property type="match status" value="1"/>
</dbReference>
<dbReference type="Pfam" id="PF00400">
    <property type="entry name" value="WD40"/>
    <property type="match status" value="5"/>
</dbReference>
<dbReference type="PRINTS" id="PR00320">
    <property type="entry name" value="GPROTEINBRPT"/>
</dbReference>
<dbReference type="SMART" id="SM00320">
    <property type="entry name" value="WD40"/>
    <property type="match status" value="7"/>
</dbReference>
<dbReference type="SUPFAM" id="SSF50978">
    <property type="entry name" value="WD40 repeat-like"/>
    <property type="match status" value="1"/>
</dbReference>
<dbReference type="PROSITE" id="PS00678">
    <property type="entry name" value="WD_REPEATS_1"/>
    <property type="match status" value="1"/>
</dbReference>
<dbReference type="PROSITE" id="PS50082">
    <property type="entry name" value="WD_REPEATS_2"/>
    <property type="match status" value="2"/>
</dbReference>
<dbReference type="PROSITE" id="PS50294">
    <property type="entry name" value="WD_REPEATS_REGION"/>
    <property type="match status" value="1"/>
</dbReference>
<accession>Q8C7V3</accession>
<accession>Q3TRG8</accession>
<accession>Q8K231</accession>
<protein>
    <recommendedName>
        <fullName>U3 small nucleolar RNA-associated protein 15 homolog</fullName>
    </recommendedName>
    <alternativeName>
        <fullName>Src-associated protein SAW</fullName>
    </alternativeName>
</protein>
<comment type="function">
    <text evidence="1">Ribosome biogenesis factor. Involved in nucleolar processing of pre-18S ribosomal RNA. Required for optimal pre-ribosomal RNA transcription by RNA polymerase I. Part of the small subunit (SSU) processome, first precursor of the small eukaryotic ribosomal subunit. During the assembly of the SSU processome in the nucleolus, many ribosome biogenesis factors, an RNA chaperone and ribosomal proteins associate with the nascent pre-rRNA and work in concert to generate RNA folding, modifications, rearrangements and cleavage as well as targeted degradation of pre-ribosomal RNA by the RNA exosome.</text>
</comment>
<comment type="subunit">
    <text evidence="1">Part of the small subunit (SSU) processome, composed of more than 70 proteins and the RNA chaperone small nucleolar RNA (snoRNA) U3. May be a component of the proposed t-UTP subcomplex of the ribosomal small subunit (SSU) processome containing at least UTP4, WDR43, HEATR1, UTP15, WDR75. Interacts directly with UTP4 and WDR43.</text>
</comment>
<comment type="subcellular location">
    <subcellularLocation>
        <location evidence="1">Nucleus</location>
        <location evidence="1">Nucleolus</location>
    </subcellularLocation>
    <text evidence="1">Found predominantly at the fibrillar center.</text>
</comment>
<comment type="sequence caution" evidence="3">
    <conflict type="erroneous initiation">
        <sequence resource="EMBL-CDS" id="AAH34372"/>
    </conflict>
    <text>Truncated N-terminus.</text>
</comment>
<name>UTP15_MOUSE</name>
<feature type="initiator methionine" description="Removed" evidence="1">
    <location>
        <position position="1"/>
    </location>
</feature>
<feature type="chain" id="PRO_0000051322" description="U3 small nucleolar RNA-associated protein 15 homolog">
    <location>
        <begin position="2"/>
        <end position="528"/>
    </location>
</feature>
<feature type="repeat" description="WD 1">
    <location>
        <begin position="36"/>
        <end position="75"/>
    </location>
</feature>
<feature type="repeat" description="WD 2">
    <location>
        <begin position="78"/>
        <end position="117"/>
    </location>
</feature>
<feature type="repeat" description="WD 3">
    <location>
        <begin position="120"/>
        <end position="159"/>
    </location>
</feature>
<feature type="repeat" description="WD 4">
    <location>
        <begin position="162"/>
        <end position="202"/>
    </location>
</feature>
<feature type="repeat" description="WD 5">
    <location>
        <begin position="204"/>
        <end position="242"/>
    </location>
</feature>
<feature type="repeat" description="WD 6">
    <location>
        <begin position="246"/>
        <end position="285"/>
    </location>
</feature>
<feature type="repeat" description="WD 7">
    <location>
        <begin position="287"/>
        <end position="326"/>
    </location>
</feature>
<feature type="region of interest" description="Disordered" evidence="2">
    <location>
        <begin position="496"/>
        <end position="528"/>
    </location>
</feature>
<feature type="compositionally biased region" description="Basic and acidic residues" evidence="2">
    <location>
        <begin position="497"/>
        <end position="516"/>
    </location>
</feature>
<feature type="modified residue" description="N-acetylalanine" evidence="1">
    <location>
        <position position="2"/>
    </location>
</feature>
<feature type="cross-link" description="Glycyl lysine isopeptide (Lys-Gly) (interchain with G-Cter in SUMO2)" evidence="1">
    <location>
        <position position="249"/>
    </location>
</feature>
<feature type="sequence conflict" description="In Ref. 3; AAH34372." evidence="3" ref="3">
    <original>E</original>
    <variation>K</variation>
    <location>
        <position position="479"/>
    </location>
</feature>
<proteinExistence type="evidence at protein level"/>
<gene>
    <name type="primary">Utp15</name>
</gene>
<sequence>MAGYKPVAIQTYPVLGEKITQDTLYWNNYKTPVQIKEFGAVSKVDFSPQLPYNYAVTASSRIHIYGRYSQEPVKTFSRFKDTAYCATFRQDGQLLVAGSEDGVVQLFDINGRAPLRQFEGHTKAVHTVDFTADNYHVVSGADDYTVKLWDIPNSKEILTFKEHSDYVRCGCASKLNPDLFVTGSYDHTVKIFDARTNKNVLCVEHGQPVESVLLFPSGGLLVSAGGRYVKVWDMLKGGQLLVSLKNHHKTVTCLCLSSSGQRLLSGSLDRKVKVYSTTSYKVVHSFDYAASILSLALSHQDETIVVGMTNGILSVKHRKSEAKKTSLPRRRRPAYRTFIKGKNYLKQRDDIMVSRPAKKHLEGYDKDLKSFRVSQALDRVLEPKCVIRTPEVTVSIIKELTRRGVLANALAGRDEKEVTRVLNFLIRNLSQPRFAPVLINAAEIIIDIYLPVIGQSSVVDKKFIVLQELVEKEIDYQRELLETLGMMDMLFATMTRNDSDPVPEHVPAELPEEKTESPTQPSDTDKNS</sequence>
<keyword id="KW-0007">Acetylation</keyword>
<keyword id="KW-1017">Isopeptide bond</keyword>
<keyword id="KW-0539">Nucleus</keyword>
<keyword id="KW-1185">Reference proteome</keyword>
<keyword id="KW-0677">Repeat</keyword>
<keyword id="KW-0690">Ribosome biogenesis</keyword>
<keyword id="KW-0698">rRNA processing</keyword>
<keyword id="KW-0804">Transcription</keyword>
<keyword id="KW-0805">Transcription regulation</keyword>
<keyword id="KW-0832">Ubl conjugation</keyword>
<keyword id="KW-0853">WD repeat</keyword>
<reference key="1">
    <citation type="submission" date="2002-09" db="EMBL/GenBank/DDBJ databases">
        <title>SAW: a novel WD-repeat domain containing protein that associates with Src.</title>
        <authorList>
            <person name="Baker S.J."/>
        </authorList>
    </citation>
    <scope>NUCLEOTIDE SEQUENCE [MRNA]</scope>
</reference>
<reference key="2">
    <citation type="journal article" date="2005" name="Science">
        <title>The transcriptional landscape of the mammalian genome.</title>
        <authorList>
            <person name="Carninci P."/>
            <person name="Kasukawa T."/>
            <person name="Katayama S."/>
            <person name="Gough J."/>
            <person name="Frith M.C."/>
            <person name="Maeda N."/>
            <person name="Oyama R."/>
            <person name="Ravasi T."/>
            <person name="Lenhard B."/>
            <person name="Wells C."/>
            <person name="Kodzius R."/>
            <person name="Shimokawa K."/>
            <person name="Bajic V.B."/>
            <person name="Brenner S.E."/>
            <person name="Batalov S."/>
            <person name="Forrest A.R."/>
            <person name="Zavolan M."/>
            <person name="Davis M.J."/>
            <person name="Wilming L.G."/>
            <person name="Aidinis V."/>
            <person name="Allen J.E."/>
            <person name="Ambesi-Impiombato A."/>
            <person name="Apweiler R."/>
            <person name="Aturaliya R.N."/>
            <person name="Bailey T.L."/>
            <person name="Bansal M."/>
            <person name="Baxter L."/>
            <person name="Beisel K.W."/>
            <person name="Bersano T."/>
            <person name="Bono H."/>
            <person name="Chalk A.M."/>
            <person name="Chiu K.P."/>
            <person name="Choudhary V."/>
            <person name="Christoffels A."/>
            <person name="Clutterbuck D.R."/>
            <person name="Crowe M.L."/>
            <person name="Dalla E."/>
            <person name="Dalrymple B.P."/>
            <person name="de Bono B."/>
            <person name="Della Gatta G."/>
            <person name="di Bernardo D."/>
            <person name="Down T."/>
            <person name="Engstrom P."/>
            <person name="Fagiolini M."/>
            <person name="Faulkner G."/>
            <person name="Fletcher C.F."/>
            <person name="Fukushima T."/>
            <person name="Furuno M."/>
            <person name="Futaki S."/>
            <person name="Gariboldi M."/>
            <person name="Georgii-Hemming P."/>
            <person name="Gingeras T.R."/>
            <person name="Gojobori T."/>
            <person name="Green R.E."/>
            <person name="Gustincich S."/>
            <person name="Harbers M."/>
            <person name="Hayashi Y."/>
            <person name="Hensch T.K."/>
            <person name="Hirokawa N."/>
            <person name="Hill D."/>
            <person name="Huminiecki L."/>
            <person name="Iacono M."/>
            <person name="Ikeo K."/>
            <person name="Iwama A."/>
            <person name="Ishikawa T."/>
            <person name="Jakt M."/>
            <person name="Kanapin A."/>
            <person name="Katoh M."/>
            <person name="Kawasawa Y."/>
            <person name="Kelso J."/>
            <person name="Kitamura H."/>
            <person name="Kitano H."/>
            <person name="Kollias G."/>
            <person name="Krishnan S.P."/>
            <person name="Kruger A."/>
            <person name="Kummerfeld S.K."/>
            <person name="Kurochkin I.V."/>
            <person name="Lareau L.F."/>
            <person name="Lazarevic D."/>
            <person name="Lipovich L."/>
            <person name="Liu J."/>
            <person name="Liuni S."/>
            <person name="McWilliam S."/>
            <person name="Madan Babu M."/>
            <person name="Madera M."/>
            <person name="Marchionni L."/>
            <person name="Matsuda H."/>
            <person name="Matsuzawa S."/>
            <person name="Miki H."/>
            <person name="Mignone F."/>
            <person name="Miyake S."/>
            <person name="Morris K."/>
            <person name="Mottagui-Tabar S."/>
            <person name="Mulder N."/>
            <person name="Nakano N."/>
            <person name="Nakauchi H."/>
            <person name="Ng P."/>
            <person name="Nilsson R."/>
            <person name="Nishiguchi S."/>
            <person name="Nishikawa S."/>
            <person name="Nori F."/>
            <person name="Ohara O."/>
            <person name="Okazaki Y."/>
            <person name="Orlando V."/>
            <person name="Pang K.C."/>
            <person name="Pavan W.J."/>
            <person name="Pavesi G."/>
            <person name="Pesole G."/>
            <person name="Petrovsky N."/>
            <person name="Piazza S."/>
            <person name="Reed J."/>
            <person name="Reid J.F."/>
            <person name="Ring B.Z."/>
            <person name="Ringwald M."/>
            <person name="Rost B."/>
            <person name="Ruan Y."/>
            <person name="Salzberg S.L."/>
            <person name="Sandelin A."/>
            <person name="Schneider C."/>
            <person name="Schoenbach C."/>
            <person name="Sekiguchi K."/>
            <person name="Semple C.A."/>
            <person name="Seno S."/>
            <person name="Sessa L."/>
            <person name="Sheng Y."/>
            <person name="Shibata Y."/>
            <person name="Shimada H."/>
            <person name="Shimada K."/>
            <person name="Silva D."/>
            <person name="Sinclair B."/>
            <person name="Sperling S."/>
            <person name="Stupka E."/>
            <person name="Sugiura K."/>
            <person name="Sultana R."/>
            <person name="Takenaka Y."/>
            <person name="Taki K."/>
            <person name="Tammoja K."/>
            <person name="Tan S.L."/>
            <person name="Tang S."/>
            <person name="Taylor M.S."/>
            <person name="Tegner J."/>
            <person name="Teichmann S.A."/>
            <person name="Ueda H.R."/>
            <person name="van Nimwegen E."/>
            <person name="Verardo R."/>
            <person name="Wei C.L."/>
            <person name="Yagi K."/>
            <person name="Yamanishi H."/>
            <person name="Zabarovsky E."/>
            <person name="Zhu S."/>
            <person name="Zimmer A."/>
            <person name="Hide W."/>
            <person name="Bult C."/>
            <person name="Grimmond S.M."/>
            <person name="Teasdale R.D."/>
            <person name="Liu E.T."/>
            <person name="Brusic V."/>
            <person name="Quackenbush J."/>
            <person name="Wahlestedt C."/>
            <person name="Mattick J.S."/>
            <person name="Hume D.A."/>
            <person name="Kai C."/>
            <person name="Sasaki D."/>
            <person name="Tomaru Y."/>
            <person name="Fukuda S."/>
            <person name="Kanamori-Katayama M."/>
            <person name="Suzuki M."/>
            <person name="Aoki J."/>
            <person name="Arakawa T."/>
            <person name="Iida J."/>
            <person name="Imamura K."/>
            <person name="Itoh M."/>
            <person name="Kato T."/>
            <person name="Kawaji H."/>
            <person name="Kawagashira N."/>
            <person name="Kawashima T."/>
            <person name="Kojima M."/>
            <person name="Kondo S."/>
            <person name="Konno H."/>
            <person name="Nakano K."/>
            <person name="Ninomiya N."/>
            <person name="Nishio T."/>
            <person name="Okada M."/>
            <person name="Plessy C."/>
            <person name="Shibata K."/>
            <person name="Shiraki T."/>
            <person name="Suzuki S."/>
            <person name="Tagami M."/>
            <person name="Waki K."/>
            <person name="Watahiki A."/>
            <person name="Okamura-Oho Y."/>
            <person name="Suzuki H."/>
            <person name="Kawai J."/>
            <person name="Hayashizaki Y."/>
        </authorList>
    </citation>
    <scope>NUCLEOTIDE SEQUENCE [LARGE SCALE MRNA]</scope>
    <source>
        <strain>C57BL/6J</strain>
        <tissue>Thymus</tissue>
    </source>
</reference>
<reference key="3">
    <citation type="journal article" date="2004" name="Genome Res.">
        <title>The status, quality, and expansion of the NIH full-length cDNA project: the Mammalian Gene Collection (MGC).</title>
        <authorList>
            <consortium name="The MGC Project Team"/>
        </authorList>
    </citation>
    <scope>NUCLEOTIDE SEQUENCE [LARGE SCALE MRNA]</scope>
    <source>
        <strain>C57BL/6J</strain>
        <tissue>Brain</tissue>
        <tissue>Mammary gland</tissue>
    </source>
</reference>
<reference key="4">
    <citation type="journal article" date="2010" name="Cell">
        <title>A tissue-specific atlas of mouse protein phosphorylation and expression.</title>
        <authorList>
            <person name="Huttlin E.L."/>
            <person name="Jedrychowski M.P."/>
            <person name="Elias J.E."/>
            <person name="Goswami T."/>
            <person name="Rad R."/>
            <person name="Beausoleil S.A."/>
            <person name="Villen J."/>
            <person name="Haas W."/>
            <person name="Sowa M.E."/>
            <person name="Gygi S.P."/>
        </authorList>
    </citation>
    <scope>IDENTIFICATION BY MASS SPECTROMETRY [LARGE SCALE ANALYSIS]</scope>
    <source>
        <tissue>Liver</tissue>
        <tissue>Testis</tissue>
    </source>
</reference>
<organism>
    <name type="scientific">Mus musculus</name>
    <name type="common">Mouse</name>
    <dbReference type="NCBI Taxonomy" id="10090"/>
    <lineage>
        <taxon>Eukaryota</taxon>
        <taxon>Metazoa</taxon>
        <taxon>Chordata</taxon>
        <taxon>Craniata</taxon>
        <taxon>Vertebrata</taxon>
        <taxon>Euteleostomi</taxon>
        <taxon>Mammalia</taxon>
        <taxon>Eutheria</taxon>
        <taxon>Euarchontoglires</taxon>
        <taxon>Glires</taxon>
        <taxon>Rodentia</taxon>
        <taxon>Myomorpha</taxon>
        <taxon>Muroidea</taxon>
        <taxon>Muridae</taxon>
        <taxon>Murinae</taxon>
        <taxon>Mus</taxon>
        <taxon>Mus</taxon>
    </lineage>
</organism>
<evidence type="ECO:0000250" key="1">
    <source>
        <dbReference type="UniProtKB" id="Q8TED0"/>
    </source>
</evidence>
<evidence type="ECO:0000256" key="2">
    <source>
        <dbReference type="SAM" id="MobiDB-lite"/>
    </source>
</evidence>
<evidence type="ECO:0000305" key="3"/>